<geneLocation type="chloroplast"/>
<name>PSBL_STAER</name>
<protein>
    <recommendedName>
        <fullName evidence="1">Photosystem II reaction center protein L</fullName>
        <shortName evidence="1">PSII-L</shortName>
    </recommendedName>
</protein>
<proteinExistence type="inferred from homology"/>
<keyword id="KW-0150">Chloroplast</keyword>
<keyword id="KW-0472">Membrane</keyword>
<keyword id="KW-0602">Photosynthesis</keyword>
<keyword id="KW-0604">Photosystem II</keyword>
<keyword id="KW-0934">Plastid</keyword>
<keyword id="KW-0674">Reaction center</keyword>
<keyword id="KW-0793">Thylakoid</keyword>
<keyword id="KW-0812">Transmembrane</keyword>
<keyword id="KW-1133">Transmembrane helix</keyword>
<evidence type="ECO:0000255" key="1">
    <source>
        <dbReference type="HAMAP-Rule" id="MF_01317"/>
    </source>
</evidence>
<dbReference type="EMBL" id="AF469721">
    <property type="protein sequence ID" value="AAQ05253.1"/>
    <property type="molecule type" value="Genomic_DNA"/>
</dbReference>
<dbReference type="RefSeq" id="YP_009113837.1">
    <property type="nucleotide sequence ID" value="NC_026041.1"/>
</dbReference>
<dbReference type="SMR" id="Q71L51"/>
<dbReference type="GeneID" id="23525953"/>
<dbReference type="GO" id="GO:0009535">
    <property type="term" value="C:chloroplast thylakoid membrane"/>
    <property type="evidence" value="ECO:0007669"/>
    <property type="project" value="UniProtKB-SubCell"/>
</dbReference>
<dbReference type="GO" id="GO:0009539">
    <property type="term" value="C:photosystem II reaction center"/>
    <property type="evidence" value="ECO:0007669"/>
    <property type="project" value="InterPro"/>
</dbReference>
<dbReference type="GO" id="GO:0015979">
    <property type="term" value="P:photosynthesis"/>
    <property type="evidence" value="ECO:0007669"/>
    <property type="project" value="UniProtKB-UniRule"/>
</dbReference>
<dbReference type="HAMAP" id="MF_01317">
    <property type="entry name" value="PSII_PsbL"/>
    <property type="match status" value="1"/>
</dbReference>
<dbReference type="InterPro" id="IPR003372">
    <property type="entry name" value="PSII_PsbL"/>
</dbReference>
<dbReference type="InterPro" id="IPR037266">
    <property type="entry name" value="PSII_PsbL_sf"/>
</dbReference>
<dbReference type="Pfam" id="PF02419">
    <property type="entry name" value="PsbL"/>
    <property type="match status" value="1"/>
</dbReference>
<dbReference type="SUPFAM" id="SSF161017">
    <property type="entry name" value="Photosystem II reaction center protein L, PsbL"/>
    <property type="match status" value="1"/>
</dbReference>
<accession>Q71L51</accession>
<feature type="chain" id="PRO_0000219774" description="Photosystem II reaction center protein L">
    <location>
        <begin position="1"/>
        <end position="38"/>
    </location>
</feature>
<feature type="transmembrane region" description="Helical" evidence="1">
    <location>
        <begin position="17"/>
        <end position="37"/>
    </location>
</feature>
<comment type="function">
    <text evidence="1">One of the components of the core complex of photosystem II (PSII). PSII is a light-driven water:plastoquinone oxidoreductase that uses light energy to abstract electrons from H(2)O, generating O(2) and a proton gradient subsequently used for ATP formation. It consists of a core antenna complex that captures photons, and an electron transfer chain that converts photonic excitation into a charge separation. This subunit is found at the monomer-monomer interface and is required for correct PSII assembly and/or dimerization.</text>
</comment>
<comment type="subunit">
    <text evidence="1">PSII is composed of 1 copy each of membrane proteins PsbA, PsbB, PsbC, PsbD, PsbE, PsbF, PsbH, PsbI, PsbJ, PsbK, PsbL, PsbM, PsbT, PsbX, PsbY, PsbZ, Psb30/Ycf12, at least 3 peripheral proteins of the oxygen-evolving complex and a large number of cofactors. It forms dimeric complexes.</text>
</comment>
<comment type="subcellular location">
    <subcellularLocation>
        <location evidence="1">Plastid</location>
        <location evidence="1">Chloroplast thylakoid membrane</location>
        <topology evidence="1">Single-pass membrane protein</topology>
    </subcellularLocation>
</comment>
<comment type="similarity">
    <text evidence="1">Belongs to the PsbL family.</text>
</comment>
<gene>
    <name evidence="1" type="primary">psbL</name>
</gene>
<organism>
    <name type="scientific">Stangeria eriopus</name>
    <name type="common">Natal grass cycad</name>
    <name type="synonym">Lomaria eriopus</name>
    <dbReference type="NCBI Taxonomy" id="34343"/>
    <lineage>
        <taxon>Eukaryota</taxon>
        <taxon>Viridiplantae</taxon>
        <taxon>Streptophyta</taxon>
        <taxon>Embryophyta</taxon>
        <taxon>Tracheophyta</taxon>
        <taxon>Spermatophyta</taxon>
        <taxon>Cycadidae</taxon>
        <taxon>Cycadales</taxon>
        <taxon>Zamiaceae</taxon>
        <taxon>Stangeria</taxon>
    </lineage>
</organism>
<reference key="1">
    <citation type="journal article" date="2003" name="Mol. Phylogenet. Evol.">
        <title>Inference of higher-order relationships in the cycads from a large chloroplast data set.</title>
        <authorList>
            <person name="Rai H.S."/>
            <person name="O'Brien H.E."/>
            <person name="Reeves P.A."/>
            <person name="Olmstead R.G."/>
            <person name="Graham S.W."/>
        </authorList>
    </citation>
    <scope>NUCLEOTIDE SEQUENCE [GENOMIC DNA]</scope>
</reference>
<sequence length="38" mass="4437">MTQSNPNEQNVELNRTSLYWGLLLIFVLAVLFSNYSFN</sequence>